<accession>Q5H0K8</accession>
<organism>
    <name type="scientific">Xanthomonas oryzae pv. oryzae (strain KACC10331 / KXO85)</name>
    <dbReference type="NCBI Taxonomy" id="291331"/>
    <lineage>
        <taxon>Bacteria</taxon>
        <taxon>Pseudomonadati</taxon>
        <taxon>Pseudomonadota</taxon>
        <taxon>Gammaproteobacteria</taxon>
        <taxon>Lysobacterales</taxon>
        <taxon>Lysobacteraceae</taxon>
        <taxon>Xanthomonas</taxon>
    </lineage>
</organism>
<sequence>MTDVALIDAGGANLGSVRYALERLGVEARVVRDAAGLQGAQRVILPGVGAAPEVMSRLRAQGLVAPLRELQVPLIGICLGMQLLFEHSEEGDVECLGLLPGIVRHMTPALGIRVPHMGWNRLVPMRESALLAGLPERASAYFVHGYAAPVTADTVAACDHGGLFTAIVQNGLRCGAQFHPERSADTGARILHNFLEMSFP</sequence>
<name>HIS5_XANOR</name>
<dbReference type="EC" id="4.3.2.10" evidence="1"/>
<dbReference type="EC" id="3.5.1.2" evidence="1"/>
<dbReference type="EMBL" id="AE013598">
    <property type="protein sequence ID" value="AAW75513.1"/>
    <property type="molecule type" value="Genomic_DNA"/>
</dbReference>
<dbReference type="SMR" id="Q5H0K8"/>
<dbReference type="STRING" id="291331.XOO2259"/>
<dbReference type="KEGG" id="xoo:XOO2259"/>
<dbReference type="HOGENOM" id="CLU_071837_0_0_6"/>
<dbReference type="UniPathway" id="UPA00031">
    <property type="reaction ID" value="UER00010"/>
</dbReference>
<dbReference type="Proteomes" id="UP000006735">
    <property type="component" value="Chromosome"/>
</dbReference>
<dbReference type="GO" id="GO:0005737">
    <property type="term" value="C:cytoplasm"/>
    <property type="evidence" value="ECO:0007669"/>
    <property type="project" value="UniProtKB-SubCell"/>
</dbReference>
<dbReference type="GO" id="GO:0004359">
    <property type="term" value="F:glutaminase activity"/>
    <property type="evidence" value="ECO:0007669"/>
    <property type="project" value="UniProtKB-EC"/>
</dbReference>
<dbReference type="GO" id="GO:0000107">
    <property type="term" value="F:imidazoleglycerol-phosphate synthase activity"/>
    <property type="evidence" value="ECO:0007669"/>
    <property type="project" value="UniProtKB-UniRule"/>
</dbReference>
<dbReference type="GO" id="GO:0016829">
    <property type="term" value="F:lyase activity"/>
    <property type="evidence" value="ECO:0007669"/>
    <property type="project" value="UniProtKB-KW"/>
</dbReference>
<dbReference type="GO" id="GO:0000105">
    <property type="term" value="P:L-histidine biosynthetic process"/>
    <property type="evidence" value="ECO:0007669"/>
    <property type="project" value="UniProtKB-UniRule"/>
</dbReference>
<dbReference type="CDD" id="cd01748">
    <property type="entry name" value="GATase1_IGP_Synthase"/>
    <property type="match status" value="1"/>
</dbReference>
<dbReference type="FunFam" id="3.40.50.880:FF:000009">
    <property type="entry name" value="Imidazole glycerol phosphate synthase subunit HisH"/>
    <property type="match status" value="1"/>
</dbReference>
<dbReference type="Gene3D" id="3.40.50.880">
    <property type="match status" value="1"/>
</dbReference>
<dbReference type="HAMAP" id="MF_00278">
    <property type="entry name" value="HisH"/>
    <property type="match status" value="1"/>
</dbReference>
<dbReference type="InterPro" id="IPR029062">
    <property type="entry name" value="Class_I_gatase-like"/>
</dbReference>
<dbReference type="InterPro" id="IPR017926">
    <property type="entry name" value="GATASE"/>
</dbReference>
<dbReference type="InterPro" id="IPR010139">
    <property type="entry name" value="Imidazole-glycPsynth_HisH"/>
</dbReference>
<dbReference type="NCBIfam" id="TIGR01855">
    <property type="entry name" value="IMP_synth_hisH"/>
    <property type="match status" value="1"/>
</dbReference>
<dbReference type="PANTHER" id="PTHR42701">
    <property type="entry name" value="IMIDAZOLE GLYCEROL PHOSPHATE SYNTHASE SUBUNIT HISH"/>
    <property type="match status" value="1"/>
</dbReference>
<dbReference type="PANTHER" id="PTHR42701:SF1">
    <property type="entry name" value="IMIDAZOLE GLYCEROL PHOSPHATE SYNTHASE SUBUNIT HISH"/>
    <property type="match status" value="1"/>
</dbReference>
<dbReference type="Pfam" id="PF00117">
    <property type="entry name" value="GATase"/>
    <property type="match status" value="1"/>
</dbReference>
<dbReference type="PIRSF" id="PIRSF000495">
    <property type="entry name" value="Amidotransf_hisH"/>
    <property type="match status" value="1"/>
</dbReference>
<dbReference type="SUPFAM" id="SSF52317">
    <property type="entry name" value="Class I glutamine amidotransferase-like"/>
    <property type="match status" value="1"/>
</dbReference>
<dbReference type="PROSITE" id="PS51273">
    <property type="entry name" value="GATASE_TYPE_1"/>
    <property type="match status" value="1"/>
</dbReference>
<evidence type="ECO:0000255" key="1">
    <source>
        <dbReference type="HAMAP-Rule" id="MF_00278"/>
    </source>
</evidence>
<keyword id="KW-0028">Amino-acid biosynthesis</keyword>
<keyword id="KW-0963">Cytoplasm</keyword>
<keyword id="KW-0315">Glutamine amidotransferase</keyword>
<keyword id="KW-0368">Histidine biosynthesis</keyword>
<keyword id="KW-0378">Hydrolase</keyword>
<keyword id="KW-0456">Lyase</keyword>
<keyword id="KW-1185">Reference proteome</keyword>
<feature type="chain" id="PRO_0000231772" description="Imidazole glycerol phosphate synthase subunit HisH">
    <location>
        <begin position="1"/>
        <end position="200"/>
    </location>
</feature>
<feature type="domain" description="Glutamine amidotransferase type-1" evidence="1">
    <location>
        <begin position="3"/>
        <end position="200"/>
    </location>
</feature>
<feature type="active site" description="Nucleophile" evidence="1">
    <location>
        <position position="78"/>
    </location>
</feature>
<feature type="active site" evidence="1">
    <location>
        <position position="179"/>
    </location>
</feature>
<feature type="active site" evidence="1">
    <location>
        <position position="181"/>
    </location>
</feature>
<protein>
    <recommendedName>
        <fullName evidence="1">Imidazole glycerol phosphate synthase subunit HisH</fullName>
        <ecNumber evidence="1">4.3.2.10</ecNumber>
    </recommendedName>
    <alternativeName>
        <fullName evidence="1">IGP synthase glutaminase subunit</fullName>
        <ecNumber evidence="1">3.5.1.2</ecNumber>
    </alternativeName>
    <alternativeName>
        <fullName evidence="1">IGP synthase subunit HisH</fullName>
    </alternativeName>
    <alternativeName>
        <fullName evidence="1">ImGP synthase subunit HisH</fullName>
        <shortName evidence="1">IGPS subunit HisH</shortName>
    </alternativeName>
</protein>
<comment type="function">
    <text evidence="1">IGPS catalyzes the conversion of PRFAR and glutamine to IGP, AICAR and glutamate. The HisH subunit catalyzes the hydrolysis of glutamine to glutamate and ammonia as part of the synthesis of IGP and AICAR. The resulting ammonia molecule is channeled to the active site of HisF.</text>
</comment>
<comment type="catalytic activity">
    <reaction evidence="1">
        <text>5-[(5-phospho-1-deoxy-D-ribulos-1-ylimino)methylamino]-1-(5-phospho-beta-D-ribosyl)imidazole-4-carboxamide + L-glutamine = D-erythro-1-(imidazol-4-yl)glycerol 3-phosphate + 5-amino-1-(5-phospho-beta-D-ribosyl)imidazole-4-carboxamide + L-glutamate + H(+)</text>
        <dbReference type="Rhea" id="RHEA:24793"/>
        <dbReference type="ChEBI" id="CHEBI:15378"/>
        <dbReference type="ChEBI" id="CHEBI:29985"/>
        <dbReference type="ChEBI" id="CHEBI:58278"/>
        <dbReference type="ChEBI" id="CHEBI:58359"/>
        <dbReference type="ChEBI" id="CHEBI:58475"/>
        <dbReference type="ChEBI" id="CHEBI:58525"/>
        <dbReference type="EC" id="4.3.2.10"/>
    </reaction>
</comment>
<comment type="catalytic activity">
    <reaction evidence="1">
        <text>L-glutamine + H2O = L-glutamate + NH4(+)</text>
        <dbReference type="Rhea" id="RHEA:15889"/>
        <dbReference type="ChEBI" id="CHEBI:15377"/>
        <dbReference type="ChEBI" id="CHEBI:28938"/>
        <dbReference type="ChEBI" id="CHEBI:29985"/>
        <dbReference type="ChEBI" id="CHEBI:58359"/>
        <dbReference type="EC" id="3.5.1.2"/>
    </reaction>
</comment>
<comment type="pathway">
    <text evidence="1">Amino-acid biosynthesis; L-histidine biosynthesis; L-histidine from 5-phospho-alpha-D-ribose 1-diphosphate: step 5/9.</text>
</comment>
<comment type="subunit">
    <text evidence="1">Heterodimer of HisH and HisF.</text>
</comment>
<comment type="subcellular location">
    <subcellularLocation>
        <location evidence="1">Cytoplasm</location>
    </subcellularLocation>
</comment>
<proteinExistence type="inferred from homology"/>
<gene>
    <name evidence="1" type="primary">hisH</name>
    <name type="ordered locus">XOO2259</name>
</gene>
<reference key="1">
    <citation type="journal article" date="2005" name="Nucleic Acids Res.">
        <title>The genome sequence of Xanthomonas oryzae pathovar oryzae KACC10331, the bacterial blight pathogen of rice.</title>
        <authorList>
            <person name="Lee B.-M."/>
            <person name="Park Y.-J."/>
            <person name="Park D.-S."/>
            <person name="Kang H.-W."/>
            <person name="Kim J.-G."/>
            <person name="Song E.-S."/>
            <person name="Park I.-C."/>
            <person name="Yoon U.-H."/>
            <person name="Hahn J.-H."/>
            <person name="Koo B.-S."/>
            <person name="Lee G.-B."/>
            <person name="Kim H."/>
            <person name="Park H.-S."/>
            <person name="Yoon K.-O."/>
            <person name="Kim J.-H."/>
            <person name="Jung C.-H."/>
            <person name="Koh N.-H."/>
            <person name="Seo J.-S."/>
            <person name="Go S.-J."/>
        </authorList>
    </citation>
    <scope>NUCLEOTIDE SEQUENCE [LARGE SCALE GENOMIC DNA]</scope>
    <source>
        <strain>KACC10331 / KXO85</strain>
    </source>
</reference>